<proteinExistence type="inferred from homology"/>
<accession>E0SPG5</accession>
<dbReference type="EC" id="6.3.4.22" evidence="1"/>
<dbReference type="EMBL" id="CP002098">
    <property type="protein sequence ID" value="ADM26908.1"/>
    <property type="molecule type" value="Genomic_DNA"/>
</dbReference>
<dbReference type="SMR" id="E0SPG5"/>
<dbReference type="STRING" id="583356.Igag_0055"/>
<dbReference type="KEGG" id="iag:Igag_0055"/>
<dbReference type="HOGENOM" id="CLU_675459_0_0_2"/>
<dbReference type="Proteomes" id="UP000001304">
    <property type="component" value="Chromosome"/>
</dbReference>
<dbReference type="GO" id="GO:0005737">
    <property type="term" value="C:cytoplasm"/>
    <property type="evidence" value="ECO:0007669"/>
    <property type="project" value="UniProtKB-SubCell"/>
</dbReference>
<dbReference type="GO" id="GO:0005524">
    <property type="term" value="F:ATP binding"/>
    <property type="evidence" value="ECO:0007669"/>
    <property type="project" value="UniProtKB-KW"/>
</dbReference>
<dbReference type="GO" id="GO:0016879">
    <property type="term" value="F:ligase activity, forming carbon-nitrogen bonds"/>
    <property type="evidence" value="ECO:0007669"/>
    <property type="project" value="UniProtKB-UniRule"/>
</dbReference>
<dbReference type="GO" id="GO:0002101">
    <property type="term" value="P:tRNA wobble cytosine modification"/>
    <property type="evidence" value="ECO:0007669"/>
    <property type="project" value="UniProtKB-UniRule"/>
</dbReference>
<dbReference type="Gene3D" id="2.40.50.1010">
    <property type="match status" value="1"/>
</dbReference>
<dbReference type="Gene3D" id="3.30.70.2200">
    <property type="match status" value="1"/>
</dbReference>
<dbReference type="Gene3D" id="3.90.600.20">
    <property type="match status" value="1"/>
</dbReference>
<dbReference type="HAMAP" id="MF_01892">
    <property type="entry name" value="tRNA_Ile2_agm2C_synt"/>
    <property type="match status" value="1"/>
</dbReference>
<dbReference type="InterPro" id="IPR053870">
    <property type="entry name" value="TiaS-like_TCKD"/>
</dbReference>
<dbReference type="InterPro" id="IPR013696">
    <property type="entry name" value="TiaS_FLD"/>
</dbReference>
<dbReference type="InterPro" id="IPR024913">
    <property type="entry name" value="tRNA_Ile2__agm2C_synt"/>
</dbReference>
<dbReference type="InterPro" id="IPR055394">
    <property type="entry name" value="Zn_ribbon_TiaS"/>
</dbReference>
<dbReference type="PANTHER" id="PTHR40705:SF2">
    <property type="entry name" value="DUF1743 DOMAIN-CONTAINING PROTEIN"/>
    <property type="match status" value="1"/>
</dbReference>
<dbReference type="PANTHER" id="PTHR40705">
    <property type="entry name" value="TRNA(ILE2) 2-AGMATINYLCYTIDINE SYNTHETASE TIAS"/>
    <property type="match status" value="1"/>
</dbReference>
<dbReference type="Pfam" id="PF08489">
    <property type="entry name" value="TiaS_FLD"/>
    <property type="match status" value="1"/>
</dbReference>
<dbReference type="Pfam" id="PF22641">
    <property type="entry name" value="TiaS_TCKD"/>
    <property type="match status" value="1"/>
</dbReference>
<dbReference type="Pfam" id="PF23783">
    <property type="entry name" value="Zn_ribbon_TiaS"/>
    <property type="match status" value="1"/>
</dbReference>
<reference key="1">
    <citation type="journal article" date="2010" name="Stand. Genomic Sci.">
        <title>Complete genome sequence of Ignisphaera aggregans type strain (AQ1.S1).</title>
        <authorList>
            <person name="Goker M."/>
            <person name="Held B."/>
            <person name="Lapidus A."/>
            <person name="Nolan M."/>
            <person name="Spring S."/>
            <person name="Yasawong M."/>
            <person name="Lucas S."/>
            <person name="Glavina Del Rio T."/>
            <person name="Tice H."/>
            <person name="Cheng J.F."/>
            <person name="Goodwin L."/>
            <person name="Tapia R."/>
            <person name="Pitluck S."/>
            <person name="Liolios K."/>
            <person name="Ivanova N."/>
            <person name="Mavromatis K."/>
            <person name="Mikhailova N."/>
            <person name="Pati A."/>
            <person name="Chen A."/>
            <person name="Palaniappan K."/>
            <person name="Brambilla E."/>
            <person name="Land M."/>
            <person name="Hauser L."/>
            <person name="Chang Y.J."/>
            <person name="Jeffries C.D."/>
            <person name="Brettin T."/>
            <person name="Detter J.C."/>
            <person name="Han C."/>
            <person name="Rohde M."/>
            <person name="Sikorski J."/>
            <person name="Woyke T."/>
            <person name="Bristow J."/>
            <person name="Eisen J.A."/>
            <person name="Markowitz V."/>
            <person name="Hugenholtz P."/>
            <person name="Kyrpides N.C."/>
            <person name="Klenk H.P."/>
        </authorList>
    </citation>
    <scope>NUCLEOTIDE SEQUENCE [LARGE SCALE GENOMIC DNA]</scope>
    <source>
        <strain>DSM 17230 / JCM 13409 / AQ1.S1</strain>
    </source>
</reference>
<feature type="chain" id="PRO_0000407294" description="tRNA(Ile2) 2-agmatinylcytidine synthetase TiaS">
    <location>
        <begin position="1"/>
        <end position="464"/>
    </location>
</feature>
<gene>
    <name evidence="1" type="primary">tiaS</name>
    <name type="ordered locus">Igag_0055</name>
</gene>
<name>TIAS_IGNAA</name>
<protein>
    <recommendedName>
        <fullName evidence="1">tRNA(Ile2) 2-agmatinylcytidine synthetase TiaS</fullName>
        <shortName evidence="1">tRNA(Ile2)-agm2C synthetase</shortName>
        <ecNumber evidence="1">6.3.4.22</ecNumber>
    </recommendedName>
    <alternativeName>
        <fullName evidence="1">tRNA(Ile2) agmatidine synthetase</fullName>
    </alternativeName>
</protein>
<evidence type="ECO:0000255" key="1">
    <source>
        <dbReference type="HAMAP-Rule" id="MF_01892"/>
    </source>
</evidence>
<organism>
    <name type="scientific">Ignisphaera aggregans (strain DSM 17230 / JCM 13409 / AQ1.S1)</name>
    <dbReference type="NCBI Taxonomy" id="583356"/>
    <lineage>
        <taxon>Archaea</taxon>
        <taxon>Thermoproteota</taxon>
        <taxon>Thermoprotei</taxon>
        <taxon>Desulfurococcales</taxon>
        <taxon>Desulfurococcaceae</taxon>
        <taxon>Ignisphaera</taxon>
    </lineage>
</organism>
<keyword id="KW-0067">ATP-binding</keyword>
<keyword id="KW-0963">Cytoplasm</keyword>
<keyword id="KW-0436">Ligase</keyword>
<keyword id="KW-0547">Nucleotide-binding</keyword>
<keyword id="KW-1185">Reference proteome</keyword>
<keyword id="KW-0819">tRNA processing</keyword>
<comment type="function">
    <text evidence="1">ATP-dependent agmatine transferase that catalyzes the formation of 2-agmatinylcytidine (agm2C) at the wobble position (C34) of tRNA(Ile2), converting the codon specificity from AUG to AUA.</text>
</comment>
<comment type="catalytic activity">
    <reaction evidence="1">
        <text>cytidine(34) in tRNA(Ile2) + agmatine + ATP + H2O = 2-agmatinylcytidine(34) in tRNA(Ile2) + AMP + 2 phosphate + 2 H(+)</text>
        <dbReference type="Rhea" id="RHEA:43608"/>
        <dbReference type="Rhea" id="RHEA-COMP:10625"/>
        <dbReference type="Rhea" id="RHEA-COMP:10626"/>
        <dbReference type="ChEBI" id="CHEBI:15377"/>
        <dbReference type="ChEBI" id="CHEBI:15378"/>
        <dbReference type="ChEBI" id="CHEBI:30616"/>
        <dbReference type="ChEBI" id="CHEBI:43474"/>
        <dbReference type="ChEBI" id="CHEBI:58145"/>
        <dbReference type="ChEBI" id="CHEBI:82748"/>
        <dbReference type="ChEBI" id="CHEBI:83545"/>
        <dbReference type="ChEBI" id="CHEBI:456215"/>
        <dbReference type="EC" id="6.3.4.22"/>
    </reaction>
</comment>
<comment type="subcellular location">
    <subcellularLocation>
        <location evidence="1">Cytoplasm</location>
    </subcellularLocation>
</comment>
<comment type="similarity">
    <text evidence="1">Belongs to the TiaS family.</text>
</comment>
<sequence length="464" mass="52750">MYENFCIYHIGLDDFDLLSYGCTTHVATYLLHSLAKRFSSIVFIDYPNLVRLNPSIPWKTRGNGAIAIRIAMECTDLNNLLEAAEDIIDEYYEKYGVRTKDVVSSDREPGLVVVRNGIVNDMGSLYITALTDVLLPEIVKKKIDKYGRENIVVSKRYCGRGIVGAAASVGWIAIDSDYTYELLVYRSEKFYSLDRCVNEESVKYFDSITKDRTFNNIDVDSNRILITSHGRDPILYGVRGEDPEVLLKALDIIRVCEPISSWTIFRTNQATDAHAIDRSVSSLRVYRTGKIRVTISSKPSIGMGGTVIINGFDATGSITLAFFRPSYLNRYASMLIPGDVIEANGHVKPWNIGPVFHVEKFSVLKLAPLYRCKAPRCPYCRKRLTKMGRGKGYKCDKCGYSVINPDLECEYIERKIRLGLYIPPPRALKHLIKPIERYGKEKYRHRYPIELKLSQITKILETSI</sequence>